<comment type="function">
    <text evidence="1">F(1)F(0) ATP synthase produces ATP from ADP in the presence of a proton or sodium gradient. F-type ATPases consist of two structural domains, F(1) containing the extramembraneous catalytic core and F(0) containing the membrane proton channel, linked together by a central stalk and a peripheral stalk. During catalysis, ATP synthesis in the catalytic domain of F(1) is coupled via a rotary mechanism of the central stalk subunits to proton translocation.</text>
</comment>
<comment type="function">
    <text evidence="1">Component of the F(0) channel, it forms part of the peripheral stalk, linking F(1) to F(0).</text>
</comment>
<comment type="subunit">
    <text evidence="1">F-type ATPases have 2 components, F(1) - the catalytic core - and F(0) - the membrane proton channel. F(1) has five subunits: alpha(3), beta(3), gamma(1), delta(1), epsilon(1). F(0) has three main subunits: a(1), b(2) and c(10-14). The alpha and beta chains form an alternating ring which encloses part of the gamma chain. F(1) is attached to F(0) by a central stalk formed by the gamma and epsilon chains, while a peripheral stalk is formed by the delta and b chains.</text>
</comment>
<comment type="subcellular location">
    <subcellularLocation>
        <location evidence="1">Cell membrane</location>
        <topology evidence="1">Single-pass membrane protein</topology>
    </subcellularLocation>
</comment>
<comment type="similarity">
    <text evidence="1">Belongs to the ATPase B chain family.</text>
</comment>
<proteinExistence type="inferred from homology"/>
<gene>
    <name evidence="1" type="primary">atpF</name>
    <name type="ordered locus">SMGWSS_035</name>
</gene>
<reference key="1">
    <citation type="journal article" date="2007" name="Proc. Natl. Acad. Sci. U.S.A.">
        <title>Parallel genomic evolution and metabolic interdependence in an ancient symbiosis.</title>
        <authorList>
            <person name="McCutcheon J.P."/>
            <person name="Moran N.A."/>
        </authorList>
    </citation>
    <scope>NUCLEOTIDE SEQUENCE [LARGE SCALE GENOMIC DNA]</scope>
    <source>
        <strain>GWSS</strain>
    </source>
</reference>
<sequence length="224" mass="27372">MTPSLGLIFWQSVIFLISFIILSKFAWNPINKLLEKREKYIIDSINNAEKAKEYLKNIKLKKKNILKNTEKMKYFIINEAFKKKEQIEKEAKKKAKLESYLIINKTQLLIENKKKIAIEKIKNEILNMSIIISEKILNKELEINEKNNNYFFNKKLLIIMKFSYKIFIKRYAKGFFFLVFNSKKEIFIKNEIEKFFSYKKELYKKNYFKFKYTFFKKKRKDNFF</sequence>
<evidence type="ECO:0000255" key="1">
    <source>
        <dbReference type="HAMAP-Rule" id="MF_01398"/>
    </source>
</evidence>
<feature type="chain" id="PRO_0000368820" description="ATP synthase subunit b">
    <location>
        <begin position="1"/>
        <end position="224"/>
    </location>
</feature>
<feature type="transmembrane region" description="Helical" evidence="1">
    <location>
        <begin position="2"/>
        <end position="22"/>
    </location>
</feature>
<name>ATPF_KARMG</name>
<organism>
    <name type="scientific">Karelsulcia muelleri (strain GWSS)</name>
    <name type="common">Sulcia muelleri</name>
    <dbReference type="NCBI Taxonomy" id="444179"/>
    <lineage>
        <taxon>Bacteria</taxon>
        <taxon>Pseudomonadati</taxon>
        <taxon>Bacteroidota</taxon>
        <taxon>Flavobacteriia</taxon>
        <taxon>Flavobacteriales</taxon>
        <taxon>Candidatus Karelsulcia</taxon>
    </lineage>
</organism>
<keyword id="KW-0066">ATP synthesis</keyword>
<keyword id="KW-1003">Cell membrane</keyword>
<keyword id="KW-0138">CF(0)</keyword>
<keyword id="KW-0375">Hydrogen ion transport</keyword>
<keyword id="KW-0406">Ion transport</keyword>
<keyword id="KW-0472">Membrane</keyword>
<keyword id="KW-0812">Transmembrane</keyword>
<keyword id="KW-1133">Transmembrane helix</keyword>
<keyword id="KW-0813">Transport</keyword>
<accession>A8Z5R3</accession>
<protein>
    <recommendedName>
        <fullName evidence="1">ATP synthase subunit b</fullName>
    </recommendedName>
    <alternativeName>
        <fullName evidence="1">ATP synthase F(0) sector subunit b</fullName>
    </alternativeName>
    <alternativeName>
        <fullName evidence="1">ATPase subunit I</fullName>
    </alternativeName>
    <alternativeName>
        <fullName evidence="1">F-type ATPase subunit b</fullName>
        <shortName evidence="1">F-ATPase subunit b</shortName>
    </alternativeName>
</protein>
<dbReference type="EMBL" id="CP000770">
    <property type="protein sequence ID" value="ABS30464.2"/>
    <property type="molecule type" value="Genomic_DNA"/>
</dbReference>
<dbReference type="SMR" id="A8Z5R3"/>
<dbReference type="STRING" id="444179.SMGWSS_035"/>
<dbReference type="KEGG" id="smg:SMGWSS_035"/>
<dbReference type="HOGENOM" id="CLU_1234485_0_0_10"/>
<dbReference type="Proteomes" id="UP000000781">
    <property type="component" value="Chromosome"/>
</dbReference>
<dbReference type="GO" id="GO:0005886">
    <property type="term" value="C:plasma membrane"/>
    <property type="evidence" value="ECO:0007669"/>
    <property type="project" value="UniProtKB-SubCell"/>
</dbReference>
<dbReference type="GO" id="GO:0045259">
    <property type="term" value="C:proton-transporting ATP synthase complex"/>
    <property type="evidence" value="ECO:0007669"/>
    <property type="project" value="UniProtKB-KW"/>
</dbReference>
<dbReference type="GO" id="GO:0046933">
    <property type="term" value="F:proton-transporting ATP synthase activity, rotational mechanism"/>
    <property type="evidence" value="ECO:0007669"/>
    <property type="project" value="UniProtKB-UniRule"/>
</dbReference>
<dbReference type="GO" id="GO:0046961">
    <property type="term" value="F:proton-transporting ATPase activity, rotational mechanism"/>
    <property type="evidence" value="ECO:0007669"/>
    <property type="project" value="TreeGrafter"/>
</dbReference>
<dbReference type="CDD" id="cd06503">
    <property type="entry name" value="ATP-synt_Fo_b"/>
    <property type="match status" value="1"/>
</dbReference>
<dbReference type="HAMAP" id="MF_01398">
    <property type="entry name" value="ATP_synth_b_bprime"/>
    <property type="match status" value="1"/>
</dbReference>
<dbReference type="InterPro" id="IPR002146">
    <property type="entry name" value="ATP_synth_b/b'su_bac/chlpt"/>
</dbReference>
<dbReference type="InterPro" id="IPR005864">
    <property type="entry name" value="ATP_synth_F0_bsu_bac"/>
</dbReference>
<dbReference type="InterPro" id="IPR050059">
    <property type="entry name" value="ATP_synthase_B_chain"/>
</dbReference>
<dbReference type="NCBIfam" id="TIGR01144">
    <property type="entry name" value="ATP_synt_b"/>
    <property type="match status" value="1"/>
</dbReference>
<dbReference type="PANTHER" id="PTHR33445:SF1">
    <property type="entry name" value="ATP SYNTHASE SUBUNIT B"/>
    <property type="match status" value="1"/>
</dbReference>
<dbReference type="PANTHER" id="PTHR33445">
    <property type="entry name" value="ATP SYNTHASE SUBUNIT B', CHLOROPLASTIC"/>
    <property type="match status" value="1"/>
</dbReference>
<dbReference type="Pfam" id="PF00430">
    <property type="entry name" value="ATP-synt_B"/>
    <property type="match status" value="1"/>
</dbReference>